<reference key="1">
    <citation type="journal article" date="2000" name="Curr. Microbiol.">
        <title>Nucleotide sequence of alpha-galactosidase MEL gene from Zygosaccharomyces mrakii.</title>
        <authorList>
            <person name="Oda Y."/>
            <person name="Fujisawa T."/>
        </authorList>
    </citation>
    <scope>NUCLEOTIDE SEQUENCE [GENOMIC DNA]</scope>
    <source>
        <strain>ATCC 36242 / CBS 4218 / JCM 1800 / NBRC 1835 / NRRL Y-12654 / VTT C-94202</strain>
    </source>
</reference>
<organism>
    <name type="scientific">Zygotorulaspora mrakii</name>
    <name type="common">Zygosaccharomyces mrakii</name>
    <dbReference type="NCBI Taxonomy" id="42260"/>
    <lineage>
        <taxon>Eukaryota</taxon>
        <taxon>Fungi</taxon>
        <taxon>Dikarya</taxon>
        <taxon>Ascomycota</taxon>
        <taxon>Saccharomycotina</taxon>
        <taxon>Saccharomycetes</taxon>
        <taxon>Saccharomycetales</taxon>
        <taxon>Saccharomycetaceae</taxon>
        <taxon>Zygotorulaspora</taxon>
    </lineage>
</organism>
<gene>
    <name type="primary">MEL</name>
</gene>
<comment type="catalytic activity">
    <reaction>
        <text>Hydrolysis of terminal, non-reducing alpha-D-galactose residues in alpha-D-galactosides, including galactose oligosaccharides, galactomannans and galactolipids.</text>
        <dbReference type="EC" id="3.2.1.22"/>
    </reaction>
</comment>
<comment type="subunit">
    <text evidence="1">Homotetramer.</text>
</comment>
<comment type="subcellular location">
    <subcellularLocation>
        <location evidence="1">Secreted</location>
    </subcellularLocation>
</comment>
<comment type="similarity">
    <text evidence="3">Belongs to the glycosyl hydrolase 27 family.</text>
</comment>
<proteinExistence type="inferred from homology"/>
<dbReference type="EC" id="3.2.1.22"/>
<dbReference type="EMBL" id="AB030209">
    <property type="protein sequence ID" value="BAA99555.1"/>
    <property type="molecule type" value="Genomic_DNA"/>
</dbReference>
<dbReference type="SMR" id="Q9P4V4"/>
<dbReference type="CAZy" id="GH27">
    <property type="family name" value="Glycoside Hydrolase Family 27"/>
</dbReference>
<dbReference type="GlyCosmos" id="Q9P4V4">
    <property type="glycosylation" value="9 sites, No reported glycans"/>
</dbReference>
<dbReference type="OrthoDB" id="5795902at2759"/>
<dbReference type="GO" id="GO:0005576">
    <property type="term" value="C:extracellular region"/>
    <property type="evidence" value="ECO:0007669"/>
    <property type="project" value="UniProtKB-SubCell"/>
</dbReference>
<dbReference type="GO" id="GO:0004557">
    <property type="term" value="F:alpha-galactosidase activity"/>
    <property type="evidence" value="ECO:0007669"/>
    <property type="project" value="UniProtKB-EC"/>
</dbReference>
<dbReference type="GO" id="GO:0005995">
    <property type="term" value="P:melibiose catabolic process"/>
    <property type="evidence" value="ECO:0007669"/>
    <property type="project" value="UniProtKB-ARBA"/>
</dbReference>
<dbReference type="CDD" id="cd14792">
    <property type="entry name" value="GH27"/>
    <property type="match status" value="1"/>
</dbReference>
<dbReference type="FunFam" id="3.20.20.70:FF:000202">
    <property type="entry name" value="Alpha-galactosidase"/>
    <property type="match status" value="1"/>
</dbReference>
<dbReference type="Gene3D" id="3.20.20.70">
    <property type="entry name" value="Aldolase class I"/>
    <property type="match status" value="1"/>
</dbReference>
<dbReference type="Gene3D" id="2.60.40.1180">
    <property type="entry name" value="Golgi alpha-mannosidase II"/>
    <property type="match status" value="1"/>
</dbReference>
<dbReference type="InterPro" id="IPR013785">
    <property type="entry name" value="Aldolase_TIM"/>
</dbReference>
<dbReference type="InterPro" id="IPR002241">
    <property type="entry name" value="Glyco_hydro_27"/>
</dbReference>
<dbReference type="InterPro" id="IPR000111">
    <property type="entry name" value="Glyco_hydro_27/36_CS"/>
</dbReference>
<dbReference type="InterPro" id="IPR013780">
    <property type="entry name" value="Glyco_hydro_b"/>
</dbReference>
<dbReference type="InterPro" id="IPR006215">
    <property type="entry name" value="Glyco_hydro_melibiase"/>
</dbReference>
<dbReference type="InterPro" id="IPR017853">
    <property type="entry name" value="Glycoside_hydrolase_SF"/>
</dbReference>
<dbReference type="InterPro" id="IPR041233">
    <property type="entry name" value="Melibiase_C"/>
</dbReference>
<dbReference type="PANTHER" id="PTHR11452:SF75">
    <property type="entry name" value="ALPHA-GALACTOSIDASE MEL1"/>
    <property type="match status" value="1"/>
</dbReference>
<dbReference type="PANTHER" id="PTHR11452">
    <property type="entry name" value="ALPHA-GALACTOSIDASE/ALPHA-N-ACETYLGALACTOSAMINIDASE"/>
    <property type="match status" value="1"/>
</dbReference>
<dbReference type="Pfam" id="PF16499">
    <property type="entry name" value="Melibiase_2"/>
    <property type="match status" value="1"/>
</dbReference>
<dbReference type="Pfam" id="PF17801">
    <property type="entry name" value="Melibiase_C"/>
    <property type="match status" value="1"/>
</dbReference>
<dbReference type="PRINTS" id="PR00740">
    <property type="entry name" value="GLHYDRLASE27"/>
</dbReference>
<dbReference type="PRINTS" id="PR00748">
    <property type="entry name" value="MELIBIASE"/>
</dbReference>
<dbReference type="SUPFAM" id="SSF51445">
    <property type="entry name" value="(Trans)glycosidases"/>
    <property type="match status" value="1"/>
</dbReference>
<dbReference type="SUPFAM" id="SSF51011">
    <property type="entry name" value="Glycosyl hydrolase domain"/>
    <property type="match status" value="1"/>
</dbReference>
<dbReference type="PROSITE" id="PS00512">
    <property type="entry name" value="ALPHA_GALACTOSIDASE"/>
    <property type="match status" value="1"/>
</dbReference>
<feature type="signal peptide" evidence="2">
    <location>
        <begin position="1"/>
        <end position="18"/>
    </location>
</feature>
<feature type="chain" id="PRO_0000001012" description="Alpha-galactosidase">
    <location>
        <begin position="19"/>
        <end position="470"/>
    </location>
</feature>
<feature type="active site" description="Nucleophile" evidence="1">
    <location>
        <position position="149"/>
    </location>
</feature>
<feature type="active site" description="Proton donor" evidence="1">
    <location>
        <position position="209"/>
    </location>
</feature>
<feature type="binding site" evidence="1">
    <location>
        <position position="72"/>
    </location>
    <ligand>
        <name>substrate</name>
    </ligand>
</feature>
<feature type="binding site" evidence="1">
    <location>
        <position position="73"/>
    </location>
    <ligand>
        <name>substrate</name>
    </ligand>
</feature>
<feature type="binding site" evidence="1">
    <location>
        <position position="147"/>
    </location>
    <ligand>
        <name>substrate</name>
    </ligand>
</feature>
<feature type="binding site" evidence="1">
    <location>
        <position position="205"/>
    </location>
    <ligand>
        <name>substrate</name>
    </ligand>
</feature>
<feature type="binding site" evidence="1">
    <location>
        <position position="251"/>
    </location>
    <ligand>
        <name>substrate</name>
    </ligand>
</feature>
<feature type="glycosylation site" description="N-linked (GlcNAc...) asparagine" evidence="2">
    <location>
        <position position="43"/>
    </location>
</feature>
<feature type="glycosylation site" description="N-linked (GlcNAc...) asparagine" evidence="2">
    <location>
        <position position="82"/>
    </location>
</feature>
<feature type="glycosylation site" description="N-linked (GlcNAc...) asparagine" evidence="2">
    <location>
        <position position="175"/>
    </location>
</feature>
<feature type="glycosylation site" description="N-linked (GlcNAc...) asparagine" evidence="2">
    <location>
        <position position="270"/>
    </location>
</feature>
<feature type="glycosylation site" description="N-linked (GlcNAc...) asparagine" evidence="2">
    <location>
        <position position="388"/>
    </location>
</feature>
<feature type="glycosylation site" description="N-linked (GlcNAc...) asparagine" evidence="2">
    <location>
        <position position="413"/>
    </location>
</feature>
<feature type="glycosylation site" description="N-linked (GlcNAc...) asparagine" evidence="2">
    <location>
        <position position="422"/>
    </location>
</feature>
<feature type="glycosylation site" description="N-linked (GlcNAc...) asparagine" evidence="2">
    <location>
        <position position="435"/>
    </location>
</feature>
<feature type="glycosylation site" description="N-linked (GlcNAc...) asparagine" evidence="2">
    <location>
        <position position="454"/>
    </location>
</feature>
<feature type="disulfide bond" evidence="1">
    <location>
        <begin position="42"/>
        <end position="74"/>
    </location>
</feature>
<feature type="disulfide bond" evidence="1">
    <location>
        <begin position="121"/>
        <end position="151"/>
    </location>
</feature>
<feature type="disulfide bond" evidence="1">
    <location>
        <begin position="221"/>
        <end position="237"/>
    </location>
</feature>
<feature type="disulfide bond" evidence="1">
    <location>
        <begin position="223"/>
        <end position="230"/>
    </location>
</feature>
<accession>Q9P4V4</accession>
<keyword id="KW-1015">Disulfide bond</keyword>
<keyword id="KW-0325">Glycoprotein</keyword>
<keyword id="KW-0326">Glycosidase</keyword>
<keyword id="KW-0378">Hydrolase</keyword>
<keyword id="KW-0964">Secreted</keyword>
<keyword id="KW-0732">Signal</keyword>
<evidence type="ECO:0000250" key="1"/>
<evidence type="ECO:0000255" key="2"/>
<evidence type="ECO:0000305" key="3"/>
<name>MEL_ZYGMR</name>
<protein>
    <recommendedName>
        <fullName>Alpha-galactosidase</fullName>
        <ecNumber>3.2.1.22</ecNumber>
    </recommendedName>
    <alternativeName>
        <fullName>Alpha-D-galactoside galactohydrolase</fullName>
    </alternativeName>
    <alternativeName>
        <fullName>MELr</fullName>
    </alternativeName>
    <alternativeName>
        <fullName>Melibiase</fullName>
    </alternativeName>
</protein>
<sequence length="470" mass="51912">MFSLLLLTSTALVETALGVSPSYNGLGLTPQMGWNNWNTFACNVTEQLLLGTADRISELGLKDVGYNYVILDDCWSGGRSSNGSLVPDLNKFPHGMKYVADHLHDQDLLFGMYSSAGEYTCAGYPGSLGHEEKDAQFFARNEVDYLKYDNCYNKGQFGTPQASYERYKAMSDALNNTGRPIFYSLCNWGQDLTFYWGSAIANSWRMSGDITADFDRPDSRCPCGDDEYDCKYAGYHCSIMNILNKAAPMGQNANPGGWNDLDMLEVGVGNLTDDEEKAHFSMWAMVRSPLIIGADVNHLKPSSFSIYAQSPVIAINQDPRGVPATRVWRRQVSDTDAYGRGEVQFWSGPLENGDQVIAFLNGGNRMRPMNAGLDDIFFDSHPGAPELNSTWAVYDLWANRMEDSVASDILNGNRSSNGLLYNSTQQSYSQGLARNDSRLFGSQIGTIQAGGRLNVTVPAHGVGLYRLRLQ</sequence>